<keyword id="KW-0067">ATP-binding</keyword>
<keyword id="KW-0143">Chaperone</keyword>
<keyword id="KW-0547">Nucleotide-binding</keyword>
<keyword id="KW-1185">Reference proteome</keyword>
<gene>
    <name type="primary">thsA</name>
    <name type="ordered locus">Saci_1401</name>
</gene>
<reference key="1">
    <citation type="journal article" date="2005" name="J. Bacteriol.">
        <title>The genome of Sulfolobus acidocaldarius, a model organism of the Crenarchaeota.</title>
        <authorList>
            <person name="Chen L."/>
            <person name="Bruegger K."/>
            <person name="Skovgaard M."/>
            <person name="Redder P."/>
            <person name="She Q."/>
            <person name="Torarinsson E."/>
            <person name="Greve B."/>
            <person name="Awayez M."/>
            <person name="Zibat A."/>
            <person name="Klenk H.-P."/>
            <person name="Garrett R.A."/>
        </authorList>
    </citation>
    <scope>NUCLEOTIDE SEQUENCE [LARGE SCALE GENOMIC DNA]</scope>
    <source>
        <strain>ATCC 33909 / DSM 639 / JCM 8929 / NBRC 15157 / NCIMB 11770</strain>
    </source>
</reference>
<reference key="2">
    <citation type="journal article" date="1999" name="Curr. Biol.">
        <title>Recurrent paralogy in the evolution of archaeal chaperonins.</title>
        <authorList>
            <person name="Archibald J.M."/>
            <person name="Logsdon J.M. Jr."/>
            <person name="Doolittle W.F."/>
        </authorList>
    </citation>
    <scope>NUCLEOTIDE SEQUENCE [GENOMIC DNA] OF 35-524</scope>
</reference>
<comment type="function">
    <text evidence="1">Molecular chaperone; binds unfolded polypeptides in vitro, and has a weak ATPase activity.</text>
</comment>
<comment type="subunit">
    <text evidence="1">Forms a Heterooligomeric complex of two stacked eight-membered rings.</text>
</comment>
<comment type="similarity">
    <text evidence="3">Belongs to the TCP-1 chaperonin family.</text>
</comment>
<evidence type="ECO:0000250" key="1"/>
<evidence type="ECO:0000256" key="2">
    <source>
        <dbReference type="SAM" id="MobiDB-lite"/>
    </source>
</evidence>
<evidence type="ECO:0000305" key="3"/>
<feature type="chain" id="PRO_0000128399" description="Thermosome subunit alpha">
    <location>
        <begin position="1"/>
        <end position="558"/>
    </location>
</feature>
<feature type="region of interest" description="Disordered" evidence="2">
    <location>
        <begin position="536"/>
        <end position="558"/>
    </location>
</feature>
<feature type="compositionally biased region" description="Low complexity" evidence="2">
    <location>
        <begin position="548"/>
        <end position="558"/>
    </location>
</feature>
<feature type="sequence conflict" description="In Ref. 2; AAF03364." evidence="3" ref="2">
    <original>F</original>
    <variation>L</variation>
    <location>
        <position position="168"/>
    </location>
</feature>
<feature type="sequence conflict" description="In Ref. 2; AAF03364." evidence="3" ref="2">
    <original>LVID</original>
    <variation>DLIA</variation>
    <location>
        <begin position="182"/>
        <end position="185"/>
    </location>
</feature>
<feature type="sequence conflict" description="In Ref. 2; AAF03364." evidence="3" ref="2">
    <original>M</original>
    <variation>T</variation>
    <location>
        <position position="497"/>
    </location>
</feature>
<name>THSA_SULAC</name>
<proteinExistence type="inferred from homology"/>
<dbReference type="EMBL" id="CP000077">
    <property type="protein sequence ID" value="AAY80731.1"/>
    <property type="molecule type" value="Genomic_DNA"/>
</dbReference>
<dbReference type="EMBL" id="AF149923">
    <property type="protein sequence ID" value="AAF03364.1"/>
    <property type="molecule type" value="Genomic_DNA"/>
</dbReference>
<dbReference type="RefSeq" id="WP_011278233.1">
    <property type="nucleotide sequence ID" value="NC_007181.1"/>
</dbReference>
<dbReference type="SMR" id="Q9V2T5"/>
<dbReference type="STRING" id="330779.Saci_1401"/>
<dbReference type="GeneID" id="14551900"/>
<dbReference type="GeneID" id="78441746"/>
<dbReference type="KEGG" id="sai:Saci_1401"/>
<dbReference type="PATRIC" id="fig|330779.12.peg.1350"/>
<dbReference type="eggNOG" id="arCOG01257">
    <property type="taxonomic scope" value="Archaea"/>
</dbReference>
<dbReference type="HOGENOM" id="CLU_008891_7_3_2"/>
<dbReference type="Proteomes" id="UP000001018">
    <property type="component" value="Chromosome"/>
</dbReference>
<dbReference type="GO" id="GO:0005524">
    <property type="term" value="F:ATP binding"/>
    <property type="evidence" value="ECO:0007669"/>
    <property type="project" value="UniProtKB-KW"/>
</dbReference>
<dbReference type="GO" id="GO:0016887">
    <property type="term" value="F:ATP hydrolysis activity"/>
    <property type="evidence" value="ECO:0007669"/>
    <property type="project" value="InterPro"/>
</dbReference>
<dbReference type="GO" id="GO:0140662">
    <property type="term" value="F:ATP-dependent protein folding chaperone"/>
    <property type="evidence" value="ECO:0007669"/>
    <property type="project" value="InterPro"/>
</dbReference>
<dbReference type="GO" id="GO:0051082">
    <property type="term" value="F:unfolded protein binding"/>
    <property type="evidence" value="ECO:0007669"/>
    <property type="project" value="InterPro"/>
</dbReference>
<dbReference type="CDD" id="cd03343">
    <property type="entry name" value="cpn60"/>
    <property type="match status" value="1"/>
</dbReference>
<dbReference type="Gene3D" id="3.50.7.10">
    <property type="entry name" value="GroEL"/>
    <property type="match status" value="1"/>
</dbReference>
<dbReference type="Gene3D" id="1.10.560.10">
    <property type="entry name" value="GroEL-like equatorial domain"/>
    <property type="match status" value="1"/>
</dbReference>
<dbReference type="Gene3D" id="3.30.260.10">
    <property type="entry name" value="TCP-1-like chaperonin intermediate domain"/>
    <property type="match status" value="1"/>
</dbReference>
<dbReference type="InterPro" id="IPR017998">
    <property type="entry name" value="Chaperone_TCP-1"/>
</dbReference>
<dbReference type="InterPro" id="IPR002194">
    <property type="entry name" value="Chaperonin_TCP-1_CS"/>
</dbReference>
<dbReference type="InterPro" id="IPR002423">
    <property type="entry name" value="Cpn60/GroEL/TCP-1"/>
</dbReference>
<dbReference type="InterPro" id="IPR027409">
    <property type="entry name" value="GroEL-like_apical_dom_sf"/>
</dbReference>
<dbReference type="InterPro" id="IPR027413">
    <property type="entry name" value="GROEL-like_equatorial_sf"/>
</dbReference>
<dbReference type="InterPro" id="IPR027410">
    <property type="entry name" value="TCP-1-like_intermed_sf"/>
</dbReference>
<dbReference type="InterPro" id="IPR053374">
    <property type="entry name" value="TCP-1_chaperonin"/>
</dbReference>
<dbReference type="InterPro" id="IPR054827">
    <property type="entry name" value="thermosome_alpha"/>
</dbReference>
<dbReference type="InterPro" id="IPR012714">
    <property type="entry name" value="Thermosome_arc"/>
</dbReference>
<dbReference type="NCBIfam" id="NF041082">
    <property type="entry name" value="thermosome_alpha"/>
    <property type="match status" value="1"/>
</dbReference>
<dbReference type="NCBIfam" id="TIGR02339">
    <property type="entry name" value="thermosome_arch"/>
    <property type="match status" value="1"/>
</dbReference>
<dbReference type="NCBIfam" id="NF041083">
    <property type="entry name" value="thermosome_beta"/>
    <property type="match status" value="1"/>
</dbReference>
<dbReference type="PANTHER" id="PTHR11353">
    <property type="entry name" value="CHAPERONIN"/>
    <property type="match status" value="1"/>
</dbReference>
<dbReference type="Pfam" id="PF00118">
    <property type="entry name" value="Cpn60_TCP1"/>
    <property type="match status" value="1"/>
</dbReference>
<dbReference type="PRINTS" id="PR00304">
    <property type="entry name" value="TCOMPLEXTCP1"/>
</dbReference>
<dbReference type="SUPFAM" id="SSF52029">
    <property type="entry name" value="GroEL apical domain-like"/>
    <property type="match status" value="1"/>
</dbReference>
<dbReference type="SUPFAM" id="SSF48592">
    <property type="entry name" value="GroEL equatorial domain-like"/>
    <property type="match status" value="1"/>
</dbReference>
<dbReference type="SUPFAM" id="SSF54849">
    <property type="entry name" value="GroEL-intermediate domain like"/>
    <property type="match status" value="1"/>
</dbReference>
<dbReference type="PROSITE" id="PS00750">
    <property type="entry name" value="TCP1_1"/>
    <property type="match status" value="1"/>
</dbReference>
<dbReference type="PROSITE" id="PS00751">
    <property type="entry name" value="TCP1_2"/>
    <property type="match status" value="1"/>
</dbReference>
<dbReference type="PROSITE" id="PS00995">
    <property type="entry name" value="TCP1_3"/>
    <property type="match status" value="1"/>
</dbReference>
<organism>
    <name type="scientific">Sulfolobus acidocaldarius (strain ATCC 33909 / DSM 639 / JCM 8929 / NBRC 15157 / NCIMB 11770)</name>
    <dbReference type="NCBI Taxonomy" id="330779"/>
    <lineage>
        <taxon>Archaea</taxon>
        <taxon>Thermoproteota</taxon>
        <taxon>Thermoprotei</taxon>
        <taxon>Sulfolobales</taxon>
        <taxon>Sulfolobaceae</taxon>
        <taxon>Sulfolobus</taxon>
    </lineage>
</organism>
<accession>Q9V2T5</accession>
<accession>Q4J901</accession>
<protein>
    <recommendedName>
        <fullName>Thermosome subunit alpha</fullName>
    </recommendedName>
    <alternativeName>
        <fullName>Chaperonin subunit alpha</fullName>
    </alternativeName>
    <alternativeName>
        <fullName>Thermophilic factor 55 alpha</fullName>
        <shortName>TF55-alpha</shortName>
    </alternativeName>
    <alternativeName>
        <fullName>Thermosome subunit 1</fullName>
    </alternativeName>
</protein>
<sequence>MAGPVLLFKEGTSRSSGRDALRNNILAAVTLAEMLKSSLGPRGLDKMLIDSFGDVTITNDGATIVKEMEIQHPAAKLLVEAAKAQDAEVGDGTTSAVVLAGLLLDKAEELLEQNVHPTIIIDGYKKALTKALEIIDQLSLKIDVNDLSSPTAKAQLKKIVSTTMSSKFIAGGAEEIDKIIDLVIDAITIVAEKRPDGTYNVPLDLIKIDKKKGGSIEDSILVHGLVLDKEVVHAGMPRRVEKAKIAVLDAALEVEKPEISAKISITSPEQIKSFLDEEARYLKEMVDKLASIGANVVICQKGIDDVAQHFLAKKGILAVRRVKRSDIEKLEKALGARIISSIKDATPEDLGYAELVEERRIGNDKMVFIEGAKNPRAVNILLRGSNDMALDEAERSLNDALHSLRNVLMKPMIVAGGGAVESELALRLREYARSVGGKEQLAIEKFAEALEEIPMILAETAGMEPIQALMDLRARHAKGLVNSGIDAVNGKIADDMMKINVIEPVRVKSQVLKSAVEAATAILKIDDLVAASALKTEKGKKEGGEGAGAETPGAPSLE</sequence>